<dbReference type="EC" id="6.3.4.21" evidence="1"/>
<dbReference type="EMBL" id="CP000872">
    <property type="protein sequence ID" value="ABX61216.1"/>
    <property type="molecule type" value="Genomic_DNA"/>
</dbReference>
<dbReference type="RefSeq" id="WP_004691295.1">
    <property type="nucleotide sequence ID" value="NC_010103.1"/>
</dbReference>
<dbReference type="SMR" id="A9M757"/>
<dbReference type="GeneID" id="55589908"/>
<dbReference type="KEGG" id="bcs:BCAN_A0115"/>
<dbReference type="HOGENOM" id="CLU_030991_1_0_5"/>
<dbReference type="PhylomeDB" id="A9M757"/>
<dbReference type="UniPathway" id="UPA00253">
    <property type="reaction ID" value="UER00457"/>
</dbReference>
<dbReference type="Proteomes" id="UP000001385">
    <property type="component" value="Chromosome I"/>
</dbReference>
<dbReference type="GO" id="GO:0005829">
    <property type="term" value="C:cytosol"/>
    <property type="evidence" value="ECO:0007669"/>
    <property type="project" value="TreeGrafter"/>
</dbReference>
<dbReference type="GO" id="GO:0004516">
    <property type="term" value="F:nicotinate phosphoribosyltransferase activity"/>
    <property type="evidence" value="ECO:0007669"/>
    <property type="project" value="UniProtKB-UniRule"/>
</dbReference>
<dbReference type="GO" id="GO:0034355">
    <property type="term" value="P:NAD biosynthetic process via the salvage pathway"/>
    <property type="evidence" value="ECO:0007669"/>
    <property type="project" value="TreeGrafter"/>
</dbReference>
<dbReference type="Gene3D" id="3.20.140.10">
    <property type="entry name" value="nicotinate phosphoribosyltransferase"/>
    <property type="match status" value="1"/>
</dbReference>
<dbReference type="HAMAP" id="MF_00570">
    <property type="entry name" value="NAPRTase"/>
    <property type="match status" value="1"/>
</dbReference>
<dbReference type="InterPro" id="IPR041525">
    <property type="entry name" value="N/Namide_PRibTrfase"/>
</dbReference>
<dbReference type="InterPro" id="IPR040727">
    <property type="entry name" value="NAPRTase_N"/>
</dbReference>
<dbReference type="InterPro" id="IPR006406">
    <property type="entry name" value="Nic_PRibTrfase"/>
</dbReference>
<dbReference type="InterPro" id="IPR007229">
    <property type="entry name" value="Nic_PRibTrfase-Fam"/>
</dbReference>
<dbReference type="InterPro" id="IPR036068">
    <property type="entry name" value="Nicotinate_pribotase-like_C"/>
</dbReference>
<dbReference type="NCBIfam" id="TIGR01514">
    <property type="entry name" value="NAPRTase"/>
    <property type="match status" value="1"/>
</dbReference>
<dbReference type="NCBIfam" id="NF003704">
    <property type="entry name" value="PRK05321.1"/>
    <property type="match status" value="1"/>
</dbReference>
<dbReference type="PANTHER" id="PTHR11098">
    <property type="entry name" value="NICOTINATE PHOSPHORIBOSYLTRANSFERASE"/>
    <property type="match status" value="1"/>
</dbReference>
<dbReference type="PANTHER" id="PTHR11098:SF1">
    <property type="entry name" value="NICOTINATE PHOSPHORIBOSYLTRANSFERASE"/>
    <property type="match status" value="1"/>
</dbReference>
<dbReference type="Pfam" id="PF04095">
    <property type="entry name" value="NAPRTase"/>
    <property type="match status" value="1"/>
</dbReference>
<dbReference type="Pfam" id="PF17767">
    <property type="entry name" value="NAPRTase_N"/>
    <property type="match status" value="1"/>
</dbReference>
<dbReference type="PIRSF" id="PIRSF000484">
    <property type="entry name" value="NAPRT"/>
    <property type="match status" value="1"/>
</dbReference>
<dbReference type="SUPFAM" id="SSF51690">
    <property type="entry name" value="Nicotinate/Quinolinate PRTase C-terminal domain-like"/>
    <property type="match status" value="1"/>
</dbReference>
<dbReference type="SUPFAM" id="SSF54675">
    <property type="entry name" value="Nicotinate/Quinolinate PRTase N-terminal domain-like"/>
    <property type="match status" value="1"/>
</dbReference>
<accession>A9M757</accession>
<feature type="chain" id="PRO_1000082323" description="Nicotinate phosphoribosyltransferase">
    <location>
        <begin position="1"/>
        <end position="434"/>
    </location>
</feature>
<feature type="modified residue" description="Phosphohistidine; by autocatalysis" evidence="1">
    <location>
        <position position="242"/>
    </location>
</feature>
<keyword id="KW-0436">Ligase</keyword>
<keyword id="KW-0597">Phosphoprotein</keyword>
<keyword id="KW-0662">Pyridine nucleotide biosynthesis</keyword>
<keyword id="KW-1185">Reference proteome</keyword>
<gene>
    <name evidence="1" type="primary">pncB</name>
    <name type="ordered locus">BCAN_A0115</name>
</gene>
<protein>
    <recommendedName>
        <fullName evidence="1">Nicotinate phosphoribosyltransferase</fullName>
        <shortName evidence="1">NAPRTase</shortName>
        <ecNumber evidence="1">6.3.4.21</ecNumber>
    </recommendedName>
</protein>
<comment type="function">
    <text evidence="1">Catalyzes the synthesis of beta-nicotinate D-ribonucleotide from nicotinate and 5-phospho-D-ribose 1-phosphate at the expense of ATP.</text>
</comment>
<comment type="catalytic activity">
    <reaction evidence="1">
        <text>nicotinate + 5-phospho-alpha-D-ribose 1-diphosphate + ATP + H2O = nicotinate beta-D-ribonucleotide + ADP + phosphate + diphosphate</text>
        <dbReference type="Rhea" id="RHEA:36163"/>
        <dbReference type="ChEBI" id="CHEBI:15377"/>
        <dbReference type="ChEBI" id="CHEBI:30616"/>
        <dbReference type="ChEBI" id="CHEBI:32544"/>
        <dbReference type="ChEBI" id="CHEBI:33019"/>
        <dbReference type="ChEBI" id="CHEBI:43474"/>
        <dbReference type="ChEBI" id="CHEBI:57502"/>
        <dbReference type="ChEBI" id="CHEBI:58017"/>
        <dbReference type="ChEBI" id="CHEBI:456216"/>
        <dbReference type="EC" id="6.3.4.21"/>
    </reaction>
</comment>
<comment type="pathway">
    <text evidence="1">Cofactor biosynthesis; NAD(+) biosynthesis; nicotinate D-ribonucleotide from nicotinate: step 1/1.</text>
</comment>
<comment type="PTM">
    <text evidence="1">Transiently phosphorylated on a His residue during the reaction cycle. Phosphorylation strongly increases the affinity for substrates and increases the rate of nicotinate D-ribonucleotide production. Dephosphorylation regenerates the low-affinity form of the enzyme, leading to product release.</text>
</comment>
<comment type="similarity">
    <text evidence="1">Belongs to the NAPRTase family.</text>
</comment>
<sequence>MAKTDLARRVYNHTWKLDPIIRSLLDTDFYKLLMLQMIWGLYPRVDATFSLINRTSSVRLADEIDEGELRAQLDHARTLRFSKKEMIWLAGNTFYGRKQIFQPEFLAWLHDFHLPEYELRRKDGQYELHFHGPWTHTTMWEIPALAIINELRSRAAMKNLGPFSLDVLYARAKAKMWSKVERLRQLPDLKISDFGTRRRHSFLWQRWCVEALKEGIGSAFTGTSNVLLAMDTDLEALGTNAHELPMVLAALAKTDDELRSAPYRVLQDWNRYYGGNLLIVLPDAFGTAAFLRNAPDWVADWTGFRPDSAPPIEGGERIIEWWKSKGKDPREKLLIFSDALDVDTIEETYRHFEGRVRMGFGWGTNLTNDFAGCAPQSIDGLKAISLVCKVTDANGHPAVKLSDNPQKATGDPKEVARYLRFFGNEERVEQLVRV</sequence>
<name>PNCB_BRUC2</name>
<organism>
    <name type="scientific">Brucella canis (strain ATCC 23365 / NCTC 10854 / RM-666)</name>
    <dbReference type="NCBI Taxonomy" id="483179"/>
    <lineage>
        <taxon>Bacteria</taxon>
        <taxon>Pseudomonadati</taxon>
        <taxon>Pseudomonadota</taxon>
        <taxon>Alphaproteobacteria</taxon>
        <taxon>Hyphomicrobiales</taxon>
        <taxon>Brucellaceae</taxon>
        <taxon>Brucella/Ochrobactrum group</taxon>
        <taxon>Brucella</taxon>
    </lineage>
</organism>
<reference key="1">
    <citation type="submission" date="2007-10" db="EMBL/GenBank/DDBJ databases">
        <title>Brucella canis ATCC 23365 whole genome shotgun sequencing project.</title>
        <authorList>
            <person name="Setubal J.C."/>
            <person name="Bowns C."/>
            <person name="Boyle S."/>
            <person name="Crasta O.R."/>
            <person name="Czar M.J."/>
            <person name="Dharmanolla C."/>
            <person name="Gillespie J.J."/>
            <person name="Kenyon R.W."/>
            <person name="Lu J."/>
            <person name="Mane S."/>
            <person name="Mohapatra S."/>
            <person name="Nagrani S."/>
            <person name="Purkayastha A."/>
            <person name="Rajasimha H.K."/>
            <person name="Shallom J.M."/>
            <person name="Shallom S."/>
            <person name="Shukla M."/>
            <person name="Snyder E.E."/>
            <person name="Sobral B.W."/>
            <person name="Wattam A.R."/>
            <person name="Will R."/>
            <person name="Williams K."/>
            <person name="Yoo H."/>
            <person name="Bruce D."/>
            <person name="Detter C."/>
            <person name="Munk C."/>
            <person name="Brettin T.S."/>
        </authorList>
    </citation>
    <scope>NUCLEOTIDE SEQUENCE [LARGE SCALE GENOMIC DNA]</scope>
    <source>
        <strain>ATCC 23365 / NCTC 10854 / RM-666</strain>
    </source>
</reference>
<proteinExistence type="inferred from homology"/>
<evidence type="ECO:0000255" key="1">
    <source>
        <dbReference type="HAMAP-Rule" id="MF_00570"/>
    </source>
</evidence>